<comment type="function">
    <text evidence="1">Regulates the transcription of several operons and genes involved in the biogenesis of Fe-S clusters and Fe-S-containing proteins.</text>
</comment>
<comment type="cofactor">
    <cofactor evidence="1">
        <name>[2Fe-2S] cluster</name>
        <dbReference type="ChEBI" id="CHEBI:190135"/>
    </cofactor>
    <text evidence="1">Binds 1 [2Fe-2S] cluster.</text>
</comment>
<proteinExistence type="inferred from homology"/>
<organism>
    <name type="scientific">Salmonella dublin (strain CT_02021853)</name>
    <dbReference type="NCBI Taxonomy" id="439851"/>
    <lineage>
        <taxon>Bacteria</taxon>
        <taxon>Pseudomonadati</taxon>
        <taxon>Pseudomonadota</taxon>
        <taxon>Gammaproteobacteria</taxon>
        <taxon>Enterobacterales</taxon>
        <taxon>Enterobacteriaceae</taxon>
        <taxon>Salmonella</taxon>
    </lineage>
</organism>
<sequence length="164" mass="17391">MRLTSKGRYAVTAMLDVALNSEAGPVPLADISERQGISLSYLEQLFSRLRKNGLVSSVRGPGGGYLLGKDAGSIAVGEVISAVDESVDATRCQGKGGCQGGDKCLTHALWRDLSDRLTGFLNNITLGELVNNQEVLDVSGRQHTHDAPRASGRAQDAIDVKLRA</sequence>
<evidence type="ECO:0000255" key="1">
    <source>
        <dbReference type="HAMAP-Rule" id="MF_01176"/>
    </source>
</evidence>
<accession>B5FR87</accession>
<feature type="chain" id="PRO_1000138105" description="HTH-type transcriptional regulator IscR">
    <location>
        <begin position="1"/>
        <end position="164"/>
    </location>
</feature>
<feature type="domain" description="HTH rrf2-type" evidence="1">
    <location>
        <begin position="2"/>
        <end position="131"/>
    </location>
</feature>
<feature type="DNA-binding region" description="H-T-H motif" evidence="1">
    <location>
        <begin position="28"/>
        <end position="51"/>
    </location>
</feature>
<feature type="binding site" evidence="1">
    <location>
        <position position="92"/>
    </location>
    <ligand>
        <name>[2Fe-2S] cluster</name>
        <dbReference type="ChEBI" id="CHEBI:190135"/>
    </ligand>
</feature>
<feature type="binding site" evidence="1">
    <location>
        <position position="98"/>
    </location>
    <ligand>
        <name>[2Fe-2S] cluster</name>
        <dbReference type="ChEBI" id="CHEBI:190135"/>
    </ligand>
</feature>
<feature type="binding site" evidence="1">
    <location>
        <position position="104"/>
    </location>
    <ligand>
        <name>[2Fe-2S] cluster</name>
        <dbReference type="ChEBI" id="CHEBI:190135"/>
    </ligand>
</feature>
<keyword id="KW-0001">2Fe-2S</keyword>
<keyword id="KW-0010">Activator</keyword>
<keyword id="KW-0238">DNA-binding</keyword>
<keyword id="KW-0408">Iron</keyword>
<keyword id="KW-0411">Iron-sulfur</keyword>
<keyword id="KW-0479">Metal-binding</keyword>
<keyword id="KW-0678">Repressor</keyword>
<keyword id="KW-0804">Transcription</keyword>
<keyword id="KW-0805">Transcription regulation</keyword>
<protein>
    <recommendedName>
        <fullName evidence="1">HTH-type transcriptional regulator IscR</fullName>
    </recommendedName>
</protein>
<reference key="1">
    <citation type="journal article" date="2011" name="J. Bacteriol.">
        <title>Comparative genomics of 28 Salmonella enterica isolates: evidence for CRISPR-mediated adaptive sublineage evolution.</title>
        <authorList>
            <person name="Fricke W.F."/>
            <person name="Mammel M.K."/>
            <person name="McDermott P.F."/>
            <person name="Tartera C."/>
            <person name="White D.G."/>
            <person name="Leclerc J.E."/>
            <person name="Ravel J."/>
            <person name="Cebula T.A."/>
        </authorList>
    </citation>
    <scope>NUCLEOTIDE SEQUENCE [LARGE SCALE GENOMIC DNA]</scope>
    <source>
        <strain>CT_02021853</strain>
    </source>
</reference>
<dbReference type="EMBL" id="CP001144">
    <property type="protein sequence ID" value="ACH75045.1"/>
    <property type="molecule type" value="Genomic_DNA"/>
</dbReference>
<dbReference type="RefSeq" id="WP_001241346.1">
    <property type="nucleotide sequence ID" value="NC_011205.1"/>
</dbReference>
<dbReference type="SMR" id="B5FR87"/>
<dbReference type="KEGG" id="sed:SeD_A2919"/>
<dbReference type="HOGENOM" id="CLU_107144_0_0_6"/>
<dbReference type="Proteomes" id="UP000008322">
    <property type="component" value="Chromosome"/>
</dbReference>
<dbReference type="GO" id="GO:0005829">
    <property type="term" value="C:cytosol"/>
    <property type="evidence" value="ECO:0007669"/>
    <property type="project" value="TreeGrafter"/>
</dbReference>
<dbReference type="GO" id="GO:0051537">
    <property type="term" value="F:2 iron, 2 sulfur cluster binding"/>
    <property type="evidence" value="ECO:0007669"/>
    <property type="project" value="UniProtKB-KW"/>
</dbReference>
<dbReference type="GO" id="GO:0003700">
    <property type="term" value="F:DNA-binding transcription factor activity"/>
    <property type="evidence" value="ECO:0007669"/>
    <property type="project" value="UniProtKB-UniRule"/>
</dbReference>
<dbReference type="GO" id="GO:0003690">
    <property type="term" value="F:double-stranded DNA binding"/>
    <property type="evidence" value="ECO:0007669"/>
    <property type="project" value="UniProtKB-UniRule"/>
</dbReference>
<dbReference type="GO" id="GO:0005506">
    <property type="term" value="F:iron ion binding"/>
    <property type="evidence" value="ECO:0007669"/>
    <property type="project" value="UniProtKB-UniRule"/>
</dbReference>
<dbReference type="FunFam" id="1.10.10.10:FF:000026">
    <property type="entry name" value="HTH-type transcriptional regulator IscR"/>
    <property type="match status" value="1"/>
</dbReference>
<dbReference type="Gene3D" id="1.10.10.10">
    <property type="entry name" value="Winged helix-like DNA-binding domain superfamily/Winged helix DNA-binding domain"/>
    <property type="match status" value="1"/>
</dbReference>
<dbReference type="HAMAP" id="MF_01176">
    <property type="entry name" value="HTH_type_IscR"/>
    <property type="match status" value="1"/>
</dbReference>
<dbReference type="InterPro" id="IPR010242">
    <property type="entry name" value="TF_HTH_IscR"/>
</dbReference>
<dbReference type="InterPro" id="IPR030489">
    <property type="entry name" value="TR_Rrf2-type_CS"/>
</dbReference>
<dbReference type="InterPro" id="IPR000944">
    <property type="entry name" value="Tscrpt_reg_Rrf2"/>
</dbReference>
<dbReference type="InterPro" id="IPR036388">
    <property type="entry name" value="WH-like_DNA-bd_sf"/>
</dbReference>
<dbReference type="InterPro" id="IPR036390">
    <property type="entry name" value="WH_DNA-bd_sf"/>
</dbReference>
<dbReference type="NCBIfam" id="TIGR02010">
    <property type="entry name" value="IscR"/>
    <property type="match status" value="1"/>
</dbReference>
<dbReference type="NCBIfam" id="NF008110">
    <property type="entry name" value="PRK10857.1"/>
    <property type="match status" value="1"/>
</dbReference>
<dbReference type="NCBIfam" id="TIGR00738">
    <property type="entry name" value="rrf2_super"/>
    <property type="match status" value="1"/>
</dbReference>
<dbReference type="PANTHER" id="PTHR33221:SF5">
    <property type="entry name" value="HTH-TYPE TRANSCRIPTIONAL REGULATOR ISCR"/>
    <property type="match status" value="1"/>
</dbReference>
<dbReference type="PANTHER" id="PTHR33221">
    <property type="entry name" value="WINGED HELIX-TURN-HELIX TRANSCRIPTIONAL REGULATOR, RRF2 FAMILY"/>
    <property type="match status" value="1"/>
</dbReference>
<dbReference type="Pfam" id="PF02082">
    <property type="entry name" value="Rrf2"/>
    <property type="match status" value="1"/>
</dbReference>
<dbReference type="SUPFAM" id="SSF46785">
    <property type="entry name" value="Winged helix' DNA-binding domain"/>
    <property type="match status" value="1"/>
</dbReference>
<dbReference type="PROSITE" id="PS01332">
    <property type="entry name" value="HTH_RRF2_1"/>
    <property type="match status" value="1"/>
</dbReference>
<dbReference type="PROSITE" id="PS51197">
    <property type="entry name" value="HTH_RRF2_2"/>
    <property type="match status" value="1"/>
</dbReference>
<gene>
    <name evidence="1" type="primary">iscR</name>
    <name type="ordered locus">SeD_A2919</name>
</gene>
<name>ISCR_SALDC</name>